<feature type="chain" id="PRO_1000052205" description="Large ribosomal subunit protein uL24">
    <location>
        <begin position="1"/>
        <end position="119"/>
    </location>
</feature>
<accession>A5CUA3</accession>
<reference key="1">
    <citation type="journal article" date="2008" name="J. Bacteriol.">
        <title>The genome sequence of the tomato-pathogenic actinomycete Clavibacter michiganensis subsp. michiganensis NCPPB382 reveals a large island involved in pathogenicity.</title>
        <authorList>
            <person name="Gartemann K.-H."/>
            <person name="Abt B."/>
            <person name="Bekel T."/>
            <person name="Burger A."/>
            <person name="Engemann J."/>
            <person name="Fluegel M."/>
            <person name="Gaigalat L."/>
            <person name="Goesmann A."/>
            <person name="Graefen I."/>
            <person name="Kalinowski J."/>
            <person name="Kaup O."/>
            <person name="Kirchner O."/>
            <person name="Krause L."/>
            <person name="Linke B."/>
            <person name="McHardy A."/>
            <person name="Meyer F."/>
            <person name="Pohle S."/>
            <person name="Rueckert C."/>
            <person name="Schneiker S."/>
            <person name="Zellermann E.-M."/>
            <person name="Puehler A."/>
            <person name="Eichenlaub R."/>
            <person name="Kaiser O."/>
            <person name="Bartels D."/>
        </authorList>
    </citation>
    <scope>NUCLEOTIDE SEQUENCE [LARGE SCALE GENOMIC DNA]</scope>
    <source>
        <strain>NCPPB 382</strain>
    </source>
</reference>
<comment type="function">
    <text evidence="1">One of two assembly initiator proteins, it binds directly to the 5'-end of the 23S rRNA, where it nucleates assembly of the 50S subunit.</text>
</comment>
<comment type="function">
    <text evidence="1">One of the proteins that surrounds the polypeptide exit tunnel on the outside of the subunit.</text>
</comment>
<comment type="subunit">
    <text evidence="1">Part of the 50S ribosomal subunit.</text>
</comment>
<comment type="similarity">
    <text evidence="1">Belongs to the universal ribosomal protein uL24 family.</text>
</comment>
<gene>
    <name evidence="1" type="primary">rplX</name>
    <name type="ordered locus">CMM_2606</name>
</gene>
<sequence length="119" mass="12948">MANIKKGDLVQVITGRTQAKGGDRGKQGKVLSVLVERNRVVVEGVNFITKHVRVGQTQRGSKTGGIETVEAPIHISNVALVDPESKKPTRVGFRTEQVEKDGVSKTVRVRYAKKSGKDL</sequence>
<proteinExistence type="inferred from homology"/>
<evidence type="ECO:0000255" key="1">
    <source>
        <dbReference type="HAMAP-Rule" id="MF_01326"/>
    </source>
</evidence>
<evidence type="ECO:0000305" key="2"/>
<protein>
    <recommendedName>
        <fullName evidence="1">Large ribosomal subunit protein uL24</fullName>
    </recommendedName>
    <alternativeName>
        <fullName evidence="2">50S ribosomal protein L24</fullName>
    </alternativeName>
</protein>
<name>RL24_CLAM3</name>
<organism>
    <name type="scientific">Clavibacter michiganensis subsp. michiganensis (strain NCPPB 382)</name>
    <dbReference type="NCBI Taxonomy" id="443906"/>
    <lineage>
        <taxon>Bacteria</taxon>
        <taxon>Bacillati</taxon>
        <taxon>Actinomycetota</taxon>
        <taxon>Actinomycetes</taxon>
        <taxon>Micrococcales</taxon>
        <taxon>Microbacteriaceae</taxon>
        <taxon>Clavibacter</taxon>
    </lineage>
</organism>
<keyword id="KW-0687">Ribonucleoprotein</keyword>
<keyword id="KW-0689">Ribosomal protein</keyword>
<keyword id="KW-0694">RNA-binding</keyword>
<keyword id="KW-0699">rRNA-binding</keyword>
<dbReference type="EMBL" id="AM711867">
    <property type="protein sequence ID" value="CAN02689.1"/>
    <property type="molecule type" value="Genomic_DNA"/>
</dbReference>
<dbReference type="RefSeq" id="WP_012039295.1">
    <property type="nucleotide sequence ID" value="NC_009480.1"/>
</dbReference>
<dbReference type="SMR" id="A5CUA3"/>
<dbReference type="GeneID" id="92948609"/>
<dbReference type="KEGG" id="cmi:CMM_2606"/>
<dbReference type="eggNOG" id="COG0198">
    <property type="taxonomic scope" value="Bacteria"/>
</dbReference>
<dbReference type="HOGENOM" id="CLU_093315_2_0_11"/>
<dbReference type="OrthoDB" id="9807419at2"/>
<dbReference type="Proteomes" id="UP000001564">
    <property type="component" value="Chromosome"/>
</dbReference>
<dbReference type="GO" id="GO:1990904">
    <property type="term" value="C:ribonucleoprotein complex"/>
    <property type="evidence" value="ECO:0007669"/>
    <property type="project" value="UniProtKB-KW"/>
</dbReference>
<dbReference type="GO" id="GO:0005840">
    <property type="term" value="C:ribosome"/>
    <property type="evidence" value="ECO:0007669"/>
    <property type="project" value="UniProtKB-KW"/>
</dbReference>
<dbReference type="GO" id="GO:0019843">
    <property type="term" value="F:rRNA binding"/>
    <property type="evidence" value="ECO:0007669"/>
    <property type="project" value="UniProtKB-UniRule"/>
</dbReference>
<dbReference type="GO" id="GO:0003735">
    <property type="term" value="F:structural constituent of ribosome"/>
    <property type="evidence" value="ECO:0007669"/>
    <property type="project" value="InterPro"/>
</dbReference>
<dbReference type="GO" id="GO:0006412">
    <property type="term" value="P:translation"/>
    <property type="evidence" value="ECO:0007669"/>
    <property type="project" value="UniProtKB-UniRule"/>
</dbReference>
<dbReference type="CDD" id="cd06089">
    <property type="entry name" value="KOW_RPL26"/>
    <property type="match status" value="1"/>
</dbReference>
<dbReference type="Gene3D" id="2.30.30.30">
    <property type="match status" value="1"/>
</dbReference>
<dbReference type="HAMAP" id="MF_01326_B">
    <property type="entry name" value="Ribosomal_uL24_B"/>
    <property type="match status" value="1"/>
</dbReference>
<dbReference type="InterPro" id="IPR014722">
    <property type="entry name" value="Rib_uL2_dom2"/>
</dbReference>
<dbReference type="InterPro" id="IPR003256">
    <property type="entry name" value="Ribosomal_uL24"/>
</dbReference>
<dbReference type="InterPro" id="IPR041988">
    <property type="entry name" value="Ribosomal_uL24_KOW"/>
</dbReference>
<dbReference type="InterPro" id="IPR008991">
    <property type="entry name" value="Translation_prot_SH3-like_sf"/>
</dbReference>
<dbReference type="NCBIfam" id="TIGR01079">
    <property type="entry name" value="rplX_bact"/>
    <property type="match status" value="1"/>
</dbReference>
<dbReference type="PANTHER" id="PTHR12903">
    <property type="entry name" value="MITOCHONDRIAL RIBOSOMAL PROTEIN L24"/>
    <property type="match status" value="1"/>
</dbReference>
<dbReference type="Pfam" id="PF17136">
    <property type="entry name" value="ribosomal_L24"/>
    <property type="match status" value="1"/>
</dbReference>
<dbReference type="SUPFAM" id="SSF50104">
    <property type="entry name" value="Translation proteins SH3-like domain"/>
    <property type="match status" value="1"/>
</dbReference>